<feature type="chain" id="PRO_0000119072" description="Host cell factor 2">
    <location>
        <begin position="1"/>
        <end position="792"/>
    </location>
</feature>
<feature type="repeat" description="Kelch 1">
    <location>
        <begin position="34"/>
        <end position="79"/>
    </location>
</feature>
<feature type="repeat" description="Kelch 2">
    <location>
        <begin position="83"/>
        <end position="130"/>
    </location>
</feature>
<feature type="repeat" description="Kelch 3">
    <location>
        <begin position="207"/>
        <end position="255"/>
    </location>
</feature>
<feature type="repeat" description="Kelch 4">
    <location>
        <begin position="257"/>
        <end position="303"/>
    </location>
</feature>
<feature type="domain" description="Fibronectin type-III 1" evidence="2">
    <location>
        <begin position="359"/>
        <end position="449"/>
    </location>
</feature>
<feature type="domain" description="Fibronectin type-III 2" evidence="2">
    <location>
        <begin position="583"/>
        <end position="675"/>
    </location>
</feature>
<feature type="domain" description="Fibronectin type-III 3" evidence="2">
    <location>
        <begin position="677"/>
        <end position="787"/>
    </location>
</feature>
<feature type="region of interest" description="Disordered" evidence="3">
    <location>
        <begin position="399"/>
        <end position="447"/>
    </location>
</feature>
<feature type="compositionally biased region" description="Polar residues" evidence="3">
    <location>
        <begin position="419"/>
        <end position="445"/>
    </location>
</feature>
<feature type="cross-link" description="Glycyl lysine isopeptide (Lys-Gly) (interchain with G-Cter in SUMO2)" evidence="7">
    <location>
        <position position="553"/>
    </location>
</feature>
<feature type="splice variant" id="VSP_057024" description="In isoform 2." evidence="6">
    <original>GV</original>
    <variation>DQ</variation>
    <location>
        <begin position="411"/>
        <end position="412"/>
    </location>
</feature>
<feature type="splice variant" id="VSP_057025" description="In isoform 2." evidence="6">
    <location>
        <begin position="413"/>
        <end position="792"/>
    </location>
</feature>
<feature type="sequence variant" id="VAR_050044" description="In dbSNP:rs2700500.">
    <original>A</original>
    <variation>S</variation>
    <location>
        <position position="46"/>
    </location>
</feature>
<feature type="sequence variant" id="VAR_033984" description="In dbSNP:rs17035206.">
    <original>G</original>
    <variation>A</variation>
    <location>
        <position position="268"/>
    </location>
</feature>
<evidence type="ECO:0000250" key="1">
    <source>
        <dbReference type="UniProtKB" id="Q9D968"/>
    </source>
</evidence>
<evidence type="ECO:0000255" key="2">
    <source>
        <dbReference type="PROSITE-ProRule" id="PRU00316"/>
    </source>
</evidence>
<evidence type="ECO:0000256" key="3">
    <source>
        <dbReference type="SAM" id="MobiDB-lite"/>
    </source>
</evidence>
<evidence type="ECO:0000269" key="4">
    <source>
    </source>
</evidence>
<evidence type="ECO:0000269" key="5">
    <source>
    </source>
</evidence>
<evidence type="ECO:0000303" key="6">
    <source>
    </source>
</evidence>
<evidence type="ECO:0007744" key="7">
    <source>
    </source>
</evidence>
<dbReference type="EMBL" id="AF117210">
    <property type="protein sequence ID" value="AAD27814.1"/>
    <property type="molecule type" value="mRNA"/>
</dbReference>
<dbReference type="EMBL" id="AK313466">
    <property type="protein sequence ID" value="BAG36252.1"/>
    <property type="molecule type" value="mRNA"/>
</dbReference>
<dbReference type="EMBL" id="AC078819">
    <property type="status" value="NOT_ANNOTATED_CDS"/>
    <property type="molecule type" value="Genomic_DNA"/>
</dbReference>
<dbReference type="EMBL" id="AC084359">
    <property type="status" value="NOT_ANNOTATED_CDS"/>
    <property type="molecule type" value="Genomic_DNA"/>
</dbReference>
<dbReference type="EMBL" id="AC089983">
    <property type="status" value="NOT_ANNOTATED_CDS"/>
    <property type="molecule type" value="Genomic_DNA"/>
</dbReference>
<dbReference type="EMBL" id="CH471054">
    <property type="protein sequence ID" value="EAW97736.1"/>
    <property type="molecule type" value="Genomic_DNA"/>
</dbReference>
<dbReference type="EMBL" id="CH471054">
    <property type="protein sequence ID" value="EAW97737.1"/>
    <property type="molecule type" value="Genomic_DNA"/>
</dbReference>
<dbReference type="EMBL" id="BC006558">
    <property type="protein sequence ID" value="AAH06558.1"/>
    <property type="molecule type" value="mRNA"/>
</dbReference>
<dbReference type="EMBL" id="BC033799">
    <property type="protein sequence ID" value="AAH33799.1"/>
    <property type="molecule type" value="mRNA"/>
</dbReference>
<dbReference type="CCDS" id="CCDS9097.1">
    <molecule id="Q9Y5Z7-1"/>
</dbReference>
<dbReference type="RefSeq" id="NP_037452.1">
    <molecule id="Q9Y5Z7-1"/>
    <property type="nucleotide sequence ID" value="NM_013320.3"/>
</dbReference>
<dbReference type="SMR" id="Q9Y5Z7"/>
<dbReference type="BioGRID" id="118959">
    <property type="interactions" value="98"/>
</dbReference>
<dbReference type="ComplexPortal" id="CPX-5850">
    <property type="entry name" value="Histone-lysine N-methyltransferase complex, KMT2A variant"/>
</dbReference>
<dbReference type="ComplexPortal" id="CPX-7062">
    <property type="entry name" value="Histone-lysine N-methyltransferase complex, KMT2B variant"/>
</dbReference>
<dbReference type="ComplexPortal" id="CPX-7110">
    <property type="entry name" value="Histone-lysine N-methyltransferase complex, SET1A variant"/>
</dbReference>
<dbReference type="ComplexPortal" id="CPX-7111">
    <property type="entry name" value="Histone-lysine N-methyltransferase complex, SET1B variant"/>
</dbReference>
<dbReference type="CORUM" id="Q9Y5Z7"/>
<dbReference type="FunCoup" id="Q9Y5Z7">
    <property type="interactions" value="3221"/>
</dbReference>
<dbReference type="IntAct" id="Q9Y5Z7">
    <property type="interactions" value="63"/>
</dbReference>
<dbReference type="MINT" id="Q9Y5Z7"/>
<dbReference type="STRING" id="9606.ENSP00000229330"/>
<dbReference type="GlyGen" id="Q9Y5Z7">
    <property type="glycosylation" value="1 site, 1 O-linked glycan (1 site)"/>
</dbReference>
<dbReference type="iPTMnet" id="Q9Y5Z7"/>
<dbReference type="PhosphoSitePlus" id="Q9Y5Z7"/>
<dbReference type="BioMuta" id="HCFC2"/>
<dbReference type="DMDM" id="62900381"/>
<dbReference type="jPOST" id="Q9Y5Z7"/>
<dbReference type="MassIVE" id="Q9Y5Z7"/>
<dbReference type="PaxDb" id="9606-ENSP00000229330"/>
<dbReference type="PeptideAtlas" id="Q9Y5Z7"/>
<dbReference type="ProteomicsDB" id="7569"/>
<dbReference type="ProteomicsDB" id="86554">
    <molecule id="Q9Y5Z7-1"/>
</dbReference>
<dbReference type="Pumba" id="Q9Y5Z7"/>
<dbReference type="Antibodypedia" id="1771">
    <property type="antibodies" value="166 antibodies from 21 providers"/>
</dbReference>
<dbReference type="DNASU" id="29915"/>
<dbReference type="Ensembl" id="ENST00000229330.9">
    <molecule id="Q9Y5Z7-1"/>
    <property type="protein sequence ID" value="ENSP00000229330.4"/>
    <property type="gene ID" value="ENSG00000111727.12"/>
</dbReference>
<dbReference type="Ensembl" id="ENST00000544223.6">
    <molecule id="Q9Y5Z7-2"/>
    <property type="protein sequence ID" value="ENSP00000442942.2"/>
    <property type="gene ID" value="ENSG00000111727.12"/>
</dbReference>
<dbReference type="GeneID" id="29915"/>
<dbReference type="KEGG" id="hsa:29915"/>
<dbReference type="MANE-Select" id="ENST00000229330.9">
    <property type="protein sequence ID" value="ENSP00000229330.4"/>
    <property type="RefSeq nucleotide sequence ID" value="NM_013320.3"/>
    <property type="RefSeq protein sequence ID" value="NP_037452.1"/>
</dbReference>
<dbReference type="UCSC" id="uc001tkj.5">
    <molecule id="Q9Y5Z7-1"/>
    <property type="organism name" value="human"/>
</dbReference>
<dbReference type="AGR" id="HGNC:24972"/>
<dbReference type="CTD" id="29915"/>
<dbReference type="DisGeNET" id="29915"/>
<dbReference type="GeneCards" id="HCFC2"/>
<dbReference type="HGNC" id="HGNC:24972">
    <property type="gene designation" value="HCFC2"/>
</dbReference>
<dbReference type="HPA" id="ENSG00000111727">
    <property type="expression patterns" value="Low tissue specificity"/>
</dbReference>
<dbReference type="MIM" id="607926">
    <property type="type" value="gene"/>
</dbReference>
<dbReference type="neXtProt" id="NX_Q9Y5Z7"/>
<dbReference type="OpenTargets" id="ENSG00000111727"/>
<dbReference type="PharmGKB" id="PA134868925"/>
<dbReference type="VEuPathDB" id="HostDB:ENSG00000111727"/>
<dbReference type="eggNOG" id="KOG4152">
    <property type="taxonomic scope" value="Eukaryota"/>
</dbReference>
<dbReference type="GeneTree" id="ENSGT00940000160733"/>
<dbReference type="HOGENOM" id="CLU_002603_1_0_1"/>
<dbReference type="InParanoid" id="Q9Y5Z7"/>
<dbReference type="OMA" id="VFKTLYC"/>
<dbReference type="OrthoDB" id="10001928at2759"/>
<dbReference type="PAN-GO" id="Q9Y5Z7">
    <property type="GO annotations" value="4 GO annotations based on evolutionary models"/>
</dbReference>
<dbReference type="PhylomeDB" id="Q9Y5Z7"/>
<dbReference type="TreeFam" id="TF314757"/>
<dbReference type="PathwayCommons" id="Q9Y5Z7"/>
<dbReference type="Reactome" id="R-HSA-9772755">
    <property type="pathway name" value="Formation of WDR5-containing histone-modifying complexes"/>
</dbReference>
<dbReference type="SignaLink" id="Q9Y5Z7"/>
<dbReference type="BioGRID-ORCS" id="29915">
    <property type="hits" value="19 hits in 1163 CRISPR screens"/>
</dbReference>
<dbReference type="ChiTaRS" id="HCFC2">
    <property type="organism name" value="human"/>
</dbReference>
<dbReference type="GenomeRNAi" id="29915"/>
<dbReference type="Pharos" id="Q9Y5Z7">
    <property type="development level" value="Tbio"/>
</dbReference>
<dbReference type="PRO" id="PR:Q9Y5Z7"/>
<dbReference type="Proteomes" id="UP000005640">
    <property type="component" value="Chromosome 12"/>
</dbReference>
<dbReference type="RNAct" id="Q9Y5Z7">
    <property type="molecule type" value="protein"/>
</dbReference>
<dbReference type="Bgee" id="ENSG00000111727">
    <property type="expression patterns" value="Expressed in calcaneal tendon and 180 other cell types or tissues"/>
</dbReference>
<dbReference type="ExpressionAtlas" id="Q9Y5Z7">
    <property type="expression patterns" value="baseline and differential"/>
</dbReference>
<dbReference type="GO" id="GO:0005737">
    <property type="term" value="C:cytoplasm"/>
    <property type="evidence" value="ECO:0000314"/>
    <property type="project" value="UniProtKB"/>
</dbReference>
<dbReference type="GO" id="GO:0005829">
    <property type="term" value="C:cytosol"/>
    <property type="evidence" value="ECO:0000314"/>
    <property type="project" value="HPA"/>
</dbReference>
<dbReference type="GO" id="GO:0035097">
    <property type="term" value="C:histone methyltransferase complex"/>
    <property type="evidence" value="ECO:0000318"/>
    <property type="project" value="GO_Central"/>
</dbReference>
<dbReference type="GO" id="GO:0071339">
    <property type="term" value="C:MLL1 complex"/>
    <property type="evidence" value="ECO:0000353"/>
    <property type="project" value="ComplexPortal"/>
</dbReference>
<dbReference type="GO" id="GO:0044665">
    <property type="term" value="C:MLL1/2 complex"/>
    <property type="evidence" value="ECO:0000353"/>
    <property type="project" value="ComplexPortal"/>
</dbReference>
<dbReference type="GO" id="GO:0005654">
    <property type="term" value="C:nucleoplasm"/>
    <property type="evidence" value="ECO:0000314"/>
    <property type="project" value="HPA"/>
</dbReference>
<dbReference type="GO" id="GO:0005634">
    <property type="term" value="C:nucleus"/>
    <property type="evidence" value="ECO:0000314"/>
    <property type="project" value="ProtInc"/>
</dbReference>
<dbReference type="GO" id="GO:0005886">
    <property type="term" value="C:plasma membrane"/>
    <property type="evidence" value="ECO:0000314"/>
    <property type="project" value="HPA"/>
</dbReference>
<dbReference type="GO" id="GO:0048188">
    <property type="term" value="C:Set1C/COMPASS complex"/>
    <property type="evidence" value="ECO:0000353"/>
    <property type="project" value="ComplexPortal"/>
</dbReference>
<dbReference type="GO" id="GO:0003713">
    <property type="term" value="F:transcription coactivator activity"/>
    <property type="evidence" value="ECO:0000318"/>
    <property type="project" value="GO_Central"/>
</dbReference>
<dbReference type="GO" id="GO:0140374">
    <property type="term" value="P:antiviral innate immune response"/>
    <property type="evidence" value="ECO:0007669"/>
    <property type="project" value="Ensembl"/>
</dbReference>
<dbReference type="GO" id="GO:0006338">
    <property type="term" value="P:chromatin remodeling"/>
    <property type="evidence" value="ECO:0000318"/>
    <property type="project" value="GO_Central"/>
</dbReference>
<dbReference type="GO" id="GO:1902615">
    <property type="term" value="P:immune response involved in response to exogenous dsRNA"/>
    <property type="evidence" value="ECO:0007669"/>
    <property type="project" value="Ensembl"/>
</dbReference>
<dbReference type="GO" id="GO:0000122">
    <property type="term" value="P:negative regulation of transcription by RNA polymerase II"/>
    <property type="evidence" value="ECO:0000250"/>
    <property type="project" value="UniProtKB"/>
</dbReference>
<dbReference type="GO" id="GO:0006355">
    <property type="term" value="P:regulation of DNA-templated transcription"/>
    <property type="evidence" value="ECO:0000318"/>
    <property type="project" value="GO_Central"/>
</dbReference>
<dbReference type="GO" id="GO:0034139">
    <property type="term" value="P:regulation of toll-like receptor 3 signaling pathway"/>
    <property type="evidence" value="ECO:0007669"/>
    <property type="project" value="Ensembl"/>
</dbReference>
<dbReference type="GO" id="GO:0006357">
    <property type="term" value="P:regulation of transcription by RNA polymerase II"/>
    <property type="evidence" value="ECO:0000304"/>
    <property type="project" value="ProtInc"/>
</dbReference>
<dbReference type="GO" id="GO:0016032">
    <property type="term" value="P:viral process"/>
    <property type="evidence" value="ECO:0000304"/>
    <property type="project" value="ProtInc"/>
</dbReference>
<dbReference type="CDD" id="cd00063">
    <property type="entry name" value="FN3"/>
    <property type="match status" value="2"/>
</dbReference>
<dbReference type="FunFam" id="2.60.40.10:FF:000443">
    <property type="entry name" value="host cell factor 1"/>
    <property type="match status" value="1"/>
</dbReference>
<dbReference type="FunFam" id="2.60.40.10:FF:000259">
    <property type="entry name" value="Host cell factor 1 (Predicted)"/>
    <property type="match status" value="1"/>
</dbReference>
<dbReference type="FunFam" id="2.120.10.80:FF:000085">
    <property type="entry name" value="host cell factor 1 isoform X4"/>
    <property type="match status" value="1"/>
</dbReference>
<dbReference type="Gene3D" id="6.10.250.2590">
    <property type="match status" value="1"/>
</dbReference>
<dbReference type="Gene3D" id="2.60.40.10">
    <property type="entry name" value="Immunoglobulins"/>
    <property type="match status" value="2"/>
</dbReference>
<dbReference type="Gene3D" id="2.120.10.80">
    <property type="entry name" value="Kelch-type beta propeller"/>
    <property type="match status" value="2"/>
</dbReference>
<dbReference type="InterPro" id="IPR003961">
    <property type="entry name" value="FN3_dom"/>
</dbReference>
<dbReference type="InterPro" id="IPR036116">
    <property type="entry name" value="FN3_sf"/>
</dbReference>
<dbReference type="InterPro" id="IPR011043">
    <property type="entry name" value="Gal_Oxase/kelch_b-propeller"/>
</dbReference>
<dbReference type="InterPro" id="IPR043536">
    <property type="entry name" value="HCF1/2"/>
</dbReference>
<dbReference type="InterPro" id="IPR013783">
    <property type="entry name" value="Ig-like_fold"/>
</dbReference>
<dbReference type="InterPro" id="IPR015915">
    <property type="entry name" value="Kelch-typ_b-propeller"/>
</dbReference>
<dbReference type="PANTHER" id="PTHR46003">
    <property type="entry name" value="HOST CELL FACTOR"/>
    <property type="match status" value="1"/>
</dbReference>
<dbReference type="PANTHER" id="PTHR46003:SF2">
    <property type="entry name" value="HOST CELL FACTOR 2"/>
    <property type="match status" value="1"/>
</dbReference>
<dbReference type="Pfam" id="PF13854">
    <property type="entry name" value="Kelch_HCF"/>
    <property type="match status" value="1"/>
</dbReference>
<dbReference type="SMART" id="SM00060">
    <property type="entry name" value="FN3"/>
    <property type="match status" value="2"/>
</dbReference>
<dbReference type="SUPFAM" id="SSF49265">
    <property type="entry name" value="Fibronectin type III"/>
    <property type="match status" value="1"/>
</dbReference>
<dbReference type="SUPFAM" id="SSF50965">
    <property type="entry name" value="Galactose oxidase, central domain"/>
    <property type="match status" value="1"/>
</dbReference>
<dbReference type="SUPFAM" id="SSF117281">
    <property type="entry name" value="Kelch motif"/>
    <property type="match status" value="1"/>
</dbReference>
<dbReference type="PROSITE" id="PS50853">
    <property type="entry name" value="FN3"/>
    <property type="match status" value="3"/>
</dbReference>
<sequence length="792" mass="86779">MAAPSLLNWRRVSSFTGPVPRARHGHRAVAIRELMIIFGGGNEGIADELHVYNTATNQWFLPAVRGDIPPGCAAHGFVCDGTRILVFGGMVEYGRYSNELYELQASRWLWKKVKPHPPPSGLPPCPRLGHSFSLYGNKCYLFGGLANESEDSNNNVPRYLNDFYELELQHGSGVVGWSIPVTKGVVPSPRESHTAVIYCKKDSGSPKMYVFGGMCGARLDDLWQLDLETMSWSKPETKGTVPLPRSLHTASVIGNKMYIFGGWVPHKGENTETSPHDCEWRCTSSFSYLNLDTTEWTTLVSDSQEDKKNSRPRPRAGHCAVAIGTRLYFWSGRDGYKKALNSQVCCKDLWYLDTEKPPAPSQVQLIKATTNSFHVKWDEVSTVEGYLLQLSTDLPYQAASSDSSAAPNMQGVRMDPHRQGSNNIVPNSINDTINSTKTEQPATKETSMKNKPDFKALTDSNAILYPSLASNASNHNSHVVDMLRKNEGPHTSANVGVLSSCLDVRTVIPETSVSSTVSSTQTMVTQQTIKTESSSTNGAVVKDETSLTTFSTKSEVDETYALPATKISRVETHATATPFSKETPSNPVATVKAGERQWCDVGIFKNNTALVSQFYLLPKGKQSISKVGNADVPDYSLLKKQDLVPGTGYRFRVAAINGCGIGPFSKISEFKTCIPGFPGAPSAVRISKNVEGIHLSWEPPTSPSGNILEYSAYLAIRTAQIQDNPSQLVFMRIYCGLKTSCIVTAGQLANAHIDYTSRPAIVFRISAKNEKGYGPATQVRWLQGNNKKAPLN</sequence>
<name>HCFC2_HUMAN</name>
<organism>
    <name type="scientific">Homo sapiens</name>
    <name type="common">Human</name>
    <dbReference type="NCBI Taxonomy" id="9606"/>
    <lineage>
        <taxon>Eukaryota</taxon>
        <taxon>Metazoa</taxon>
        <taxon>Chordata</taxon>
        <taxon>Craniata</taxon>
        <taxon>Vertebrata</taxon>
        <taxon>Euteleostomi</taxon>
        <taxon>Mammalia</taxon>
        <taxon>Eutheria</taxon>
        <taxon>Euarchontoglires</taxon>
        <taxon>Primates</taxon>
        <taxon>Haplorrhini</taxon>
        <taxon>Catarrhini</taxon>
        <taxon>Hominidae</taxon>
        <taxon>Homo</taxon>
    </lineage>
</organism>
<proteinExistence type="evidence at protein level"/>
<reference key="1">
    <citation type="journal article" date="1999" name="J. Virol.">
        <title>Herpes simplex virus transactivator VP16 discriminates between HCF-1 and a novel family member, HCF-2.</title>
        <authorList>
            <person name="Johnson K.M."/>
            <person name="Mahajan S.S."/>
            <person name="Wilson A.C."/>
        </authorList>
    </citation>
    <scope>NUCLEOTIDE SEQUENCE [MRNA] (ISOFORM 1)</scope>
    <scope>SUBCELLULAR LOCATION</scope>
    <scope>TISSUE SPECIFICITY</scope>
    <source>
        <tissue>Testis</tissue>
    </source>
</reference>
<reference key="2">
    <citation type="journal article" date="2004" name="Nat. Genet.">
        <title>Complete sequencing and characterization of 21,243 full-length human cDNAs.</title>
        <authorList>
            <person name="Ota T."/>
            <person name="Suzuki Y."/>
            <person name="Nishikawa T."/>
            <person name="Otsuki T."/>
            <person name="Sugiyama T."/>
            <person name="Irie R."/>
            <person name="Wakamatsu A."/>
            <person name="Hayashi K."/>
            <person name="Sato H."/>
            <person name="Nagai K."/>
            <person name="Kimura K."/>
            <person name="Makita H."/>
            <person name="Sekine M."/>
            <person name="Obayashi M."/>
            <person name="Nishi T."/>
            <person name="Shibahara T."/>
            <person name="Tanaka T."/>
            <person name="Ishii S."/>
            <person name="Yamamoto J."/>
            <person name="Saito K."/>
            <person name="Kawai Y."/>
            <person name="Isono Y."/>
            <person name="Nakamura Y."/>
            <person name="Nagahari K."/>
            <person name="Murakami K."/>
            <person name="Yasuda T."/>
            <person name="Iwayanagi T."/>
            <person name="Wagatsuma M."/>
            <person name="Shiratori A."/>
            <person name="Sudo H."/>
            <person name="Hosoiri T."/>
            <person name="Kaku Y."/>
            <person name="Kodaira H."/>
            <person name="Kondo H."/>
            <person name="Sugawara M."/>
            <person name="Takahashi M."/>
            <person name="Kanda K."/>
            <person name="Yokoi T."/>
            <person name="Furuya T."/>
            <person name="Kikkawa E."/>
            <person name="Omura Y."/>
            <person name="Abe K."/>
            <person name="Kamihara K."/>
            <person name="Katsuta N."/>
            <person name="Sato K."/>
            <person name="Tanikawa M."/>
            <person name="Yamazaki M."/>
            <person name="Ninomiya K."/>
            <person name="Ishibashi T."/>
            <person name="Yamashita H."/>
            <person name="Murakawa K."/>
            <person name="Fujimori K."/>
            <person name="Tanai H."/>
            <person name="Kimata M."/>
            <person name="Watanabe M."/>
            <person name="Hiraoka S."/>
            <person name="Chiba Y."/>
            <person name="Ishida S."/>
            <person name="Ono Y."/>
            <person name="Takiguchi S."/>
            <person name="Watanabe S."/>
            <person name="Yosida M."/>
            <person name="Hotuta T."/>
            <person name="Kusano J."/>
            <person name="Kanehori K."/>
            <person name="Takahashi-Fujii A."/>
            <person name="Hara H."/>
            <person name="Tanase T.-O."/>
            <person name="Nomura Y."/>
            <person name="Togiya S."/>
            <person name="Komai F."/>
            <person name="Hara R."/>
            <person name="Takeuchi K."/>
            <person name="Arita M."/>
            <person name="Imose N."/>
            <person name="Musashino K."/>
            <person name="Yuuki H."/>
            <person name="Oshima A."/>
            <person name="Sasaki N."/>
            <person name="Aotsuka S."/>
            <person name="Yoshikawa Y."/>
            <person name="Matsunawa H."/>
            <person name="Ichihara T."/>
            <person name="Shiohata N."/>
            <person name="Sano S."/>
            <person name="Moriya S."/>
            <person name="Momiyama H."/>
            <person name="Satoh N."/>
            <person name="Takami S."/>
            <person name="Terashima Y."/>
            <person name="Suzuki O."/>
            <person name="Nakagawa S."/>
            <person name="Senoh A."/>
            <person name="Mizoguchi H."/>
            <person name="Goto Y."/>
            <person name="Shimizu F."/>
            <person name="Wakebe H."/>
            <person name="Hishigaki H."/>
            <person name="Watanabe T."/>
            <person name="Sugiyama A."/>
            <person name="Takemoto M."/>
            <person name="Kawakami B."/>
            <person name="Yamazaki M."/>
            <person name="Watanabe K."/>
            <person name="Kumagai A."/>
            <person name="Itakura S."/>
            <person name="Fukuzumi Y."/>
            <person name="Fujimori Y."/>
            <person name="Komiyama M."/>
            <person name="Tashiro H."/>
            <person name="Tanigami A."/>
            <person name="Fujiwara T."/>
            <person name="Ono T."/>
            <person name="Yamada K."/>
            <person name="Fujii Y."/>
            <person name="Ozaki K."/>
            <person name="Hirao M."/>
            <person name="Ohmori Y."/>
            <person name="Kawabata A."/>
            <person name="Hikiji T."/>
            <person name="Kobatake N."/>
            <person name="Inagaki H."/>
            <person name="Ikema Y."/>
            <person name="Okamoto S."/>
            <person name="Okitani R."/>
            <person name="Kawakami T."/>
            <person name="Noguchi S."/>
            <person name="Itoh T."/>
            <person name="Shigeta K."/>
            <person name="Senba T."/>
            <person name="Matsumura K."/>
            <person name="Nakajima Y."/>
            <person name="Mizuno T."/>
            <person name="Morinaga M."/>
            <person name="Sasaki M."/>
            <person name="Togashi T."/>
            <person name="Oyama M."/>
            <person name="Hata H."/>
            <person name="Watanabe M."/>
            <person name="Komatsu T."/>
            <person name="Mizushima-Sugano J."/>
            <person name="Satoh T."/>
            <person name="Shirai Y."/>
            <person name="Takahashi Y."/>
            <person name="Nakagawa K."/>
            <person name="Okumura K."/>
            <person name="Nagase T."/>
            <person name="Nomura N."/>
            <person name="Kikuchi H."/>
            <person name="Masuho Y."/>
            <person name="Yamashita R."/>
            <person name="Nakai K."/>
            <person name="Yada T."/>
            <person name="Nakamura Y."/>
            <person name="Ohara O."/>
            <person name="Isogai T."/>
            <person name="Sugano S."/>
        </authorList>
    </citation>
    <scope>NUCLEOTIDE SEQUENCE [LARGE SCALE MRNA] (ISOFORM 1)</scope>
    <source>
        <tissue>Hippocampus</tissue>
    </source>
</reference>
<reference key="3">
    <citation type="journal article" date="2006" name="Nature">
        <title>The finished DNA sequence of human chromosome 12.</title>
        <authorList>
            <person name="Scherer S.E."/>
            <person name="Muzny D.M."/>
            <person name="Buhay C.J."/>
            <person name="Chen R."/>
            <person name="Cree A."/>
            <person name="Ding Y."/>
            <person name="Dugan-Rocha S."/>
            <person name="Gill R."/>
            <person name="Gunaratne P."/>
            <person name="Harris R.A."/>
            <person name="Hawes A.C."/>
            <person name="Hernandez J."/>
            <person name="Hodgson A.V."/>
            <person name="Hume J."/>
            <person name="Jackson A."/>
            <person name="Khan Z.M."/>
            <person name="Kovar-Smith C."/>
            <person name="Lewis L.R."/>
            <person name="Lozado R.J."/>
            <person name="Metzker M.L."/>
            <person name="Milosavljevic A."/>
            <person name="Miner G.R."/>
            <person name="Montgomery K.T."/>
            <person name="Morgan M.B."/>
            <person name="Nazareth L.V."/>
            <person name="Scott G."/>
            <person name="Sodergren E."/>
            <person name="Song X.-Z."/>
            <person name="Steffen D."/>
            <person name="Lovering R.C."/>
            <person name="Wheeler D.A."/>
            <person name="Worley K.C."/>
            <person name="Yuan Y."/>
            <person name="Zhang Z."/>
            <person name="Adams C.Q."/>
            <person name="Ansari-Lari M.A."/>
            <person name="Ayele M."/>
            <person name="Brown M.J."/>
            <person name="Chen G."/>
            <person name="Chen Z."/>
            <person name="Clerc-Blankenburg K.P."/>
            <person name="Davis C."/>
            <person name="Delgado O."/>
            <person name="Dinh H.H."/>
            <person name="Draper H."/>
            <person name="Gonzalez-Garay M.L."/>
            <person name="Havlak P."/>
            <person name="Jackson L.R."/>
            <person name="Jacob L.S."/>
            <person name="Kelly S.H."/>
            <person name="Li L."/>
            <person name="Li Z."/>
            <person name="Liu J."/>
            <person name="Liu W."/>
            <person name="Lu J."/>
            <person name="Maheshwari M."/>
            <person name="Nguyen B.-V."/>
            <person name="Okwuonu G.O."/>
            <person name="Pasternak S."/>
            <person name="Perez L.M."/>
            <person name="Plopper F.J.H."/>
            <person name="Santibanez J."/>
            <person name="Shen H."/>
            <person name="Tabor P.E."/>
            <person name="Verduzco D."/>
            <person name="Waldron L."/>
            <person name="Wang Q."/>
            <person name="Williams G.A."/>
            <person name="Zhang J."/>
            <person name="Zhou J."/>
            <person name="Allen C.C."/>
            <person name="Amin A.G."/>
            <person name="Anyalebechi V."/>
            <person name="Bailey M."/>
            <person name="Barbaria J.A."/>
            <person name="Bimage K.E."/>
            <person name="Bryant N.P."/>
            <person name="Burch P.E."/>
            <person name="Burkett C.E."/>
            <person name="Burrell K.L."/>
            <person name="Calderon E."/>
            <person name="Cardenas V."/>
            <person name="Carter K."/>
            <person name="Casias K."/>
            <person name="Cavazos I."/>
            <person name="Cavazos S.R."/>
            <person name="Ceasar H."/>
            <person name="Chacko J."/>
            <person name="Chan S.N."/>
            <person name="Chavez D."/>
            <person name="Christopoulos C."/>
            <person name="Chu J."/>
            <person name="Cockrell R."/>
            <person name="Cox C.D."/>
            <person name="Dang M."/>
            <person name="Dathorne S.R."/>
            <person name="David R."/>
            <person name="Davis C.M."/>
            <person name="Davy-Carroll L."/>
            <person name="Deshazo D.R."/>
            <person name="Donlin J.E."/>
            <person name="D'Souza L."/>
            <person name="Eaves K.A."/>
            <person name="Egan A."/>
            <person name="Emery-Cohen A.J."/>
            <person name="Escotto M."/>
            <person name="Flagg N."/>
            <person name="Forbes L.D."/>
            <person name="Gabisi A.M."/>
            <person name="Garza M."/>
            <person name="Hamilton C."/>
            <person name="Henderson N."/>
            <person name="Hernandez O."/>
            <person name="Hines S."/>
            <person name="Hogues M.E."/>
            <person name="Huang M."/>
            <person name="Idlebird D.G."/>
            <person name="Johnson R."/>
            <person name="Jolivet A."/>
            <person name="Jones S."/>
            <person name="Kagan R."/>
            <person name="King L.M."/>
            <person name="Leal B."/>
            <person name="Lebow H."/>
            <person name="Lee S."/>
            <person name="LeVan J.M."/>
            <person name="Lewis L.C."/>
            <person name="London P."/>
            <person name="Lorensuhewa L.M."/>
            <person name="Loulseged H."/>
            <person name="Lovett D.A."/>
            <person name="Lucier A."/>
            <person name="Lucier R.L."/>
            <person name="Ma J."/>
            <person name="Madu R.C."/>
            <person name="Mapua P."/>
            <person name="Martindale A.D."/>
            <person name="Martinez E."/>
            <person name="Massey E."/>
            <person name="Mawhiney S."/>
            <person name="Meador M.G."/>
            <person name="Mendez S."/>
            <person name="Mercado C."/>
            <person name="Mercado I.C."/>
            <person name="Merritt C.E."/>
            <person name="Miner Z.L."/>
            <person name="Minja E."/>
            <person name="Mitchell T."/>
            <person name="Mohabbat F."/>
            <person name="Mohabbat K."/>
            <person name="Montgomery B."/>
            <person name="Moore N."/>
            <person name="Morris S."/>
            <person name="Munidasa M."/>
            <person name="Ngo R.N."/>
            <person name="Nguyen N.B."/>
            <person name="Nickerson E."/>
            <person name="Nwaokelemeh O.O."/>
            <person name="Nwokenkwo S."/>
            <person name="Obregon M."/>
            <person name="Oguh M."/>
            <person name="Oragunye N."/>
            <person name="Oviedo R.J."/>
            <person name="Parish B.J."/>
            <person name="Parker D.N."/>
            <person name="Parrish J."/>
            <person name="Parks K.L."/>
            <person name="Paul H.A."/>
            <person name="Payton B.A."/>
            <person name="Perez A."/>
            <person name="Perrin W."/>
            <person name="Pickens A."/>
            <person name="Primus E.L."/>
            <person name="Pu L.-L."/>
            <person name="Puazo M."/>
            <person name="Quiles M.M."/>
            <person name="Quiroz J.B."/>
            <person name="Rabata D."/>
            <person name="Reeves K."/>
            <person name="Ruiz S.J."/>
            <person name="Shao H."/>
            <person name="Sisson I."/>
            <person name="Sonaike T."/>
            <person name="Sorelle R.P."/>
            <person name="Sutton A.E."/>
            <person name="Svatek A.F."/>
            <person name="Svetz L.A."/>
            <person name="Tamerisa K.S."/>
            <person name="Taylor T.R."/>
            <person name="Teague B."/>
            <person name="Thomas N."/>
            <person name="Thorn R.D."/>
            <person name="Trejos Z.Y."/>
            <person name="Trevino B.K."/>
            <person name="Ukegbu O.N."/>
            <person name="Urban J.B."/>
            <person name="Vasquez L.I."/>
            <person name="Vera V.A."/>
            <person name="Villasana D.M."/>
            <person name="Wang L."/>
            <person name="Ward-Moore S."/>
            <person name="Warren J.T."/>
            <person name="Wei X."/>
            <person name="White F."/>
            <person name="Williamson A.L."/>
            <person name="Wleczyk R."/>
            <person name="Wooden H.S."/>
            <person name="Wooden S.H."/>
            <person name="Yen J."/>
            <person name="Yoon L."/>
            <person name="Yoon V."/>
            <person name="Zorrilla S.E."/>
            <person name="Nelson D."/>
            <person name="Kucherlapati R."/>
            <person name="Weinstock G."/>
            <person name="Gibbs R.A."/>
        </authorList>
    </citation>
    <scope>NUCLEOTIDE SEQUENCE [LARGE SCALE GENOMIC DNA]</scope>
</reference>
<reference key="4">
    <citation type="submission" date="2005-07" db="EMBL/GenBank/DDBJ databases">
        <authorList>
            <person name="Mural R.J."/>
            <person name="Istrail S."/>
            <person name="Sutton G.G."/>
            <person name="Florea L."/>
            <person name="Halpern A.L."/>
            <person name="Mobarry C.M."/>
            <person name="Lippert R."/>
            <person name="Walenz B."/>
            <person name="Shatkay H."/>
            <person name="Dew I."/>
            <person name="Miller J.R."/>
            <person name="Flanigan M.J."/>
            <person name="Edwards N.J."/>
            <person name="Bolanos R."/>
            <person name="Fasulo D."/>
            <person name="Halldorsson B.V."/>
            <person name="Hannenhalli S."/>
            <person name="Turner R."/>
            <person name="Yooseph S."/>
            <person name="Lu F."/>
            <person name="Nusskern D.R."/>
            <person name="Shue B.C."/>
            <person name="Zheng X.H."/>
            <person name="Zhong F."/>
            <person name="Delcher A.L."/>
            <person name="Huson D.H."/>
            <person name="Kravitz S.A."/>
            <person name="Mouchard L."/>
            <person name="Reinert K."/>
            <person name="Remington K.A."/>
            <person name="Clark A.G."/>
            <person name="Waterman M.S."/>
            <person name="Eichler E.E."/>
            <person name="Adams M.D."/>
            <person name="Hunkapiller M.W."/>
            <person name="Myers E.W."/>
            <person name="Venter J.C."/>
        </authorList>
    </citation>
    <scope>NUCLEOTIDE SEQUENCE [LARGE SCALE GENOMIC DNA]</scope>
</reference>
<reference key="5">
    <citation type="journal article" date="2004" name="Genome Res.">
        <title>The status, quality, and expansion of the NIH full-length cDNA project: the Mammalian Gene Collection (MGC).</title>
        <authorList>
            <consortium name="The MGC Project Team"/>
        </authorList>
    </citation>
    <scope>NUCLEOTIDE SEQUENCE [LARGE SCALE MRNA] (ISOFORMS 1 AND 2)</scope>
    <source>
        <tissue>Brain</tissue>
        <tissue>Lung</tissue>
    </source>
</reference>
<reference key="6">
    <citation type="journal article" date="2004" name="Mol. Cell. Biol.">
        <title>Leukemia proto-oncoprotein MLL forms a SET1-like histone methyltransferase complex with menin to regulate Hox gene expression.</title>
        <authorList>
            <person name="Yokoyama A."/>
            <person name="Wang Z."/>
            <person name="Wysocka J."/>
            <person name="Sanyal M."/>
            <person name="Aufiero D.J."/>
            <person name="Kitabayashi I."/>
            <person name="Herr W."/>
            <person name="Cleary M.L."/>
        </authorList>
    </citation>
    <scope>IDENTIFICATION IN A COMPLEX WITH KMT2A</scope>
</reference>
<reference key="7">
    <citation type="journal article" date="2017" name="Nat. Struct. Mol. Biol.">
        <title>Site-specific mapping of the human SUMO proteome reveals co-modification with phosphorylation.</title>
        <authorList>
            <person name="Hendriks I.A."/>
            <person name="Lyon D."/>
            <person name="Young C."/>
            <person name="Jensen L.J."/>
            <person name="Vertegaal A.C."/>
            <person name="Nielsen M.L."/>
        </authorList>
    </citation>
    <scope>SUMOYLATION [LARGE SCALE ANALYSIS] AT LYS-553</scope>
    <scope>IDENTIFICATION BY MASS SPECTROMETRY [LARGE SCALE ANALYSIS]</scope>
</reference>
<protein>
    <recommendedName>
        <fullName>Host cell factor 2</fullName>
        <shortName>HCF-2</shortName>
    </recommendedName>
    <alternativeName>
        <fullName>C2 factor</fullName>
    </alternativeName>
</protein>
<accession>Q9Y5Z7</accession>
<accession>B2R8Q5</accession>
<accession>C0H5X3</accession>
<comment type="subunit">
    <text evidence="1 5">Binds KMT2A/MLL1. Component of the MLL1/MLL complex, at least composed of KMT2A/MLL1, ASH2L, RBBP5, DPY30, WDR5, MEN1, HCFC1 and HCFC2 (PubMed:15199122). Interacts with TASOR (By similarity).</text>
</comment>
<comment type="interaction">
    <interactant intactId="EBI-592728">
        <id>Q9Y5Z7</id>
    </interactant>
    <interactant intactId="EBI-744342">
        <id>Q8IVD9</id>
        <label>NUDCD3</label>
    </interactant>
    <organismsDiffer>false</organismsDiffer>
    <experiments>5</experiments>
</comment>
<comment type="subcellular location">
    <subcellularLocation>
        <location evidence="4">Cytoplasm</location>
    </subcellularLocation>
    <subcellularLocation>
        <location evidence="4">Nucleus</location>
    </subcellularLocation>
</comment>
<comment type="alternative products">
    <event type="alternative splicing"/>
    <isoform>
        <id>Q9Y5Z7-1</id>
        <name>1</name>
        <sequence type="displayed"/>
    </isoform>
    <isoform>
        <id>Q9Y5Z7-2</id>
        <name>2</name>
        <sequence type="described" ref="VSP_057024 VSP_057025"/>
    </isoform>
</comment>
<comment type="tissue specificity">
    <text evidence="4">Highly expressed in testis. Detected at lower levels in spleen, thymus, prostate, ovary, small intestine and colon.</text>
</comment>
<keyword id="KW-0025">Alternative splicing</keyword>
<keyword id="KW-0963">Cytoplasm</keyword>
<keyword id="KW-1017">Isopeptide bond</keyword>
<keyword id="KW-0880">Kelch repeat</keyword>
<keyword id="KW-0539">Nucleus</keyword>
<keyword id="KW-1267">Proteomics identification</keyword>
<keyword id="KW-1185">Reference proteome</keyword>
<keyword id="KW-0677">Repeat</keyword>
<keyword id="KW-0832">Ubl conjugation</keyword>
<gene>
    <name type="primary">HCFC2</name>
</gene>